<protein>
    <recommendedName>
        <fullName>Osmotin-like protein OSML13</fullName>
    </recommendedName>
    <alternativeName>
        <fullName>PA13</fullName>
    </alternativeName>
</protein>
<accession>P50701</accession>
<feature type="signal peptide" evidence="1">
    <location>
        <begin position="1"/>
        <end position="21"/>
    </location>
</feature>
<feature type="chain" id="PRO_0000034039" description="Osmotin-like protein OSML13">
    <location>
        <begin position="22"/>
        <end position="246"/>
    </location>
</feature>
<feature type="disulfide bond" evidence="2">
    <location>
        <begin position="30"/>
        <end position="225"/>
    </location>
</feature>
<feature type="disulfide bond" evidence="2">
    <location>
        <begin position="72"/>
        <end position="82"/>
    </location>
</feature>
<feature type="disulfide bond" evidence="2">
    <location>
        <begin position="87"/>
        <end position="93"/>
    </location>
</feature>
<feature type="disulfide bond" evidence="2">
    <location>
        <begin position="141"/>
        <end position="213"/>
    </location>
</feature>
<feature type="disulfide bond" evidence="2">
    <location>
        <begin position="146"/>
        <end position="196"/>
    </location>
</feature>
<feature type="disulfide bond" evidence="2">
    <location>
        <begin position="154"/>
        <end position="164"/>
    </location>
</feature>
<feature type="disulfide bond" evidence="2">
    <location>
        <begin position="168"/>
        <end position="177"/>
    </location>
</feature>
<feature type="disulfide bond" evidence="2">
    <location>
        <begin position="178"/>
        <end position="183"/>
    </location>
</feature>
<keyword id="KW-1015">Disulfide bond</keyword>
<keyword id="KW-0732">Signal</keyword>
<keyword id="KW-0346">Stress response</keyword>
<comment type="induction">
    <text>By abscisic acid (ABA), salt, salicylic acid, wounding, and fungal infection.</text>
</comment>
<comment type="similarity">
    <text evidence="2">Belongs to the thaumatin family.</text>
</comment>
<proteinExistence type="evidence at transcript level"/>
<dbReference type="EMBL" id="X67121">
    <property type="protein sequence ID" value="CAA47601.1"/>
    <property type="molecule type" value="mRNA"/>
</dbReference>
<dbReference type="EMBL" id="X72928">
    <property type="protein sequence ID" value="CAA51432.1"/>
    <property type="molecule type" value="Genomic_DNA"/>
</dbReference>
<dbReference type="PIR" id="S30144">
    <property type="entry name" value="S30144"/>
</dbReference>
<dbReference type="SMR" id="P50701"/>
<dbReference type="CDD" id="cd09217">
    <property type="entry name" value="TLP-P"/>
    <property type="match status" value="1"/>
</dbReference>
<dbReference type="FunFam" id="2.60.110.10:FF:000003">
    <property type="entry name" value="Thaumatin I"/>
    <property type="match status" value="1"/>
</dbReference>
<dbReference type="Gene3D" id="2.60.110.10">
    <property type="entry name" value="Thaumatin"/>
    <property type="match status" value="1"/>
</dbReference>
<dbReference type="InterPro" id="IPR037176">
    <property type="entry name" value="Osmotin/thaumatin-like_sf"/>
</dbReference>
<dbReference type="InterPro" id="IPR001938">
    <property type="entry name" value="Thaumatin"/>
</dbReference>
<dbReference type="InterPro" id="IPR017949">
    <property type="entry name" value="Thaumatin_CS"/>
</dbReference>
<dbReference type="PANTHER" id="PTHR31048">
    <property type="entry name" value="OS03G0233200 PROTEIN"/>
    <property type="match status" value="1"/>
</dbReference>
<dbReference type="Pfam" id="PF00314">
    <property type="entry name" value="Thaumatin"/>
    <property type="match status" value="1"/>
</dbReference>
<dbReference type="PIRSF" id="PIRSF002703">
    <property type="entry name" value="Thaumatin"/>
    <property type="match status" value="1"/>
</dbReference>
<dbReference type="PRINTS" id="PR00347">
    <property type="entry name" value="THAUMATIN"/>
</dbReference>
<dbReference type="SMART" id="SM00205">
    <property type="entry name" value="THN"/>
    <property type="match status" value="1"/>
</dbReference>
<dbReference type="SUPFAM" id="SSF49870">
    <property type="entry name" value="Osmotin, thaumatin-like protein"/>
    <property type="match status" value="1"/>
</dbReference>
<dbReference type="PROSITE" id="PS00316">
    <property type="entry name" value="THAUMATIN_1"/>
    <property type="match status" value="1"/>
</dbReference>
<dbReference type="PROSITE" id="PS51367">
    <property type="entry name" value="THAUMATIN_2"/>
    <property type="match status" value="1"/>
</dbReference>
<evidence type="ECO:0000255" key="1"/>
<evidence type="ECO:0000255" key="2">
    <source>
        <dbReference type="PROSITE-ProRule" id="PRU00699"/>
    </source>
</evidence>
<sequence length="246" mass="26654">MAYLRSSFVFFLLAFVTYTYAATIEVRNNCPYTVWAASTPIGGGRRLDRGQTWVINAPRGTKMARIWGRTNCNFDGAGRGSCQTGDCGGVLQCTGWGKPPNTLAEYALDQFSNLDFWDISLVDGFNIPMTFAPTNPSGGKCHAIHCTANINGECPGSLRVPGGCNNPCTTFGGQQYCCTQGPCGPTDLSRFFKQRCPDAYSYPQDDPTSTFTCPSGSTNYRVVFCPNGVTSPNFPLEMPASDEEAK</sequence>
<reference key="1">
    <citation type="journal article" date="1993" name="Plant Mol. Biol.">
        <title>Expression of an ABA-responsive osmotin-like gene during the induction of freezing tolerance in Solanum commersonii.</title>
        <authorList>
            <person name="Zhu B."/>
            <person name="Chen T.H.H."/>
            <person name="Li P.H."/>
        </authorList>
    </citation>
    <scope>NUCLEOTIDE SEQUENCE [MRNA]</scope>
</reference>
<reference key="2">
    <citation type="journal article" date="1995" name="Plant Physiol.">
        <title>Activation of two osmotin-like protein genes by abiotic stimuli and fungal pathogen in transgenic potato plants.</title>
        <authorList>
            <person name="Zhu B."/>
            <person name="Chen T.H.H."/>
            <person name="Li P.H."/>
        </authorList>
    </citation>
    <scope>NUCLEOTIDE SEQUENCE [GENOMIC DNA]</scope>
</reference>
<name>OS13_SOLCO</name>
<organism>
    <name type="scientific">Solanum commersonii</name>
    <name type="common">Commerson's wild potato</name>
    <name type="synonym">Commerson's nightshade</name>
    <dbReference type="NCBI Taxonomy" id="4109"/>
    <lineage>
        <taxon>Eukaryota</taxon>
        <taxon>Viridiplantae</taxon>
        <taxon>Streptophyta</taxon>
        <taxon>Embryophyta</taxon>
        <taxon>Tracheophyta</taxon>
        <taxon>Spermatophyta</taxon>
        <taxon>Magnoliopsida</taxon>
        <taxon>eudicotyledons</taxon>
        <taxon>Gunneridae</taxon>
        <taxon>Pentapetalae</taxon>
        <taxon>asterids</taxon>
        <taxon>lamiids</taxon>
        <taxon>Solanales</taxon>
        <taxon>Solanaceae</taxon>
        <taxon>Solanoideae</taxon>
        <taxon>Solaneae</taxon>
        <taxon>Solanum</taxon>
    </lineage>
</organism>